<dbReference type="EC" id="6.1.1.22" evidence="1"/>
<dbReference type="EMBL" id="AE013218">
    <property type="protein sequence ID" value="AAM67901.1"/>
    <property type="molecule type" value="Genomic_DNA"/>
</dbReference>
<dbReference type="RefSeq" id="WP_011053868.1">
    <property type="nucleotide sequence ID" value="NC_004061.1"/>
</dbReference>
<dbReference type="SMR" id="Q8K9I7"/>
<dbReference type="STRING" id="198804.BUsg_348"/>
<dbReference type="GeneID" id="93003818"/>
<dbReference type="KEGG" id="bas:BUsg_348"/>
<dbReference type="eggNOG" id="COG0017">
    <property type="taxonomic scope" value="Bacteria"/>
</dbReference>
<dbReference type="HOGENOM" id="CLU_004553_2_0_6"/>
<dbReference type="Proteomes" id="UP000000416">
    <property type="component" value="Chromosome"/>
</dbReference>
<dbReference type="GO" id="GO:0005737">
    <property type="term" value="C:cytoplasm"/>
    <property type="evidence" value="ECO:0007669"/>
    <property type="project" value="UniProtKB-SubCell"/>
</dbReference>
<dbReference type="GO" id="GO:0004816">
    <property type="term" value="F:asparagine-tRNA ligase activity"/>
    <property type="evidence" value="ECO:0007669"/>
    <property type="project" value="UniProtKB-UniRule"/>
</dbReference>
<dbReference type="GO" id="GO:0005524">
    <property type="term" value="F:ATP binding"/>
    <property type="evidence" value="ECO:0007669"/>
    <property type="project" value="UniProtKB-UniRule"/>
</dbReference>
<dbReference type="GO" id="GO:0003676">
    <property type="term" value="F:nucleic acid binding"/>
    <property type="evidence" value="ECO:0007669"/>
    <property type="project" value="InterPro"/>
</dbReference>
<dbReference type="GO" id="GO:0006421">
    <property type="term" value="P:asparaginyl-tRNA aminoacylation"/>
    <property type="evidence" value="ECO:0007669"/>
    <property type="project" value="UniProtKB-UniRule"/>
</dbReference>
<dbReference type="CDD" id="cd00776">
    <property type="entry name" value="AsxRS_core"/>
    <property type="match status" value="1"/>
</dbReference>
<dbReference type="CDD" id="cd04318">
    <property type="entry name" value="EcAsnRS_like_N"/>
    <property type="match status" value="1"/>
</dbReference>
<dbReference type="FunFam" id="3.30.930.10:FF:000016">
    <property type="entry name" value="Asparagine--tRNA ligase"/>
    <property type="match status" value="1"/>
</dbReference>
<dbReference type="Gene3D" id="3.30.930.10">
    <property type="entry name" value="Bira Bifunctional Protein, Domain 2"/>
    <property type="match status" value="1"/>
</dbReference>
<dbReference type="Gene3D" id="2.40.50.140">
    <property type="entry name" value="Nucleic acid-binding proteins"/>
    <property type="match status" value="1"/>
</dbReference>
<dbReference type="HAMAP" id="MF_00534">
    <property type="entry name" value="Asn_tRNA_synth"/>
    <property type="match status" value="1"/>
</dbReference>
<dbReference type="InterPro" id="IPR004364">
    <property type="entry name" value="Aa-tRNA-synt_II"/>
</dbReference>
<dbReference type="InterPro" id="IPR006195">
    <property type="entry name" value="aa-tRNA-synth_II"/>
</dbReference>
<dbReference type="InterPro" id="IPR045864">
    <property type="entry name" value="aa-tRNA-synth_II/BPL/LPL"/>
</dbReference>
<dbReference type="InterPro" id="IPR004522">
    <property type="entry name" value="Asn-tRNA-ligase"/>
</dbReference>
<dbReference type="InterPro" id="IPR002312">
    <property type="entry name" value="Asp/Asn-tRNA-synth_IIb"/>
</dbReference>
<dbReference type="InterPro" id="IPR012340">
    <property type="entry name" value="NA-bd_OB-fold"/>
</dbReference>
<dbReference type="InterPro" id="IPR004365">
    <property type="entry name" value="NA-bd_OB_tRNA"/>
</dbReference>
<dbReference type="NCBIfam" id="TIGR00457">
    <property type="entry name" value="asnS"/>
    <property type="match status" value="1"/>
</dbReference>
<dbReference type="NCBIfam" id="NF003037">
    <property type="entry name" value="PRK03932.1"/>
    <property type="match status" value="1"/>
</dbReference>
<dbReference type="PANTHER" id="PTHR22594:SF34">
    <property type="entry name" value="ASPARAGINE--TRNA LIGASE, MITOCHONDRIAL-RELATED"/>
    <property type="match status" value="1"/>
</dbReference>
<dbReference type="PANTHER" id="PTHR22594">
    <property type="entry name" value="ASPARTYL/LYSYL-TRNA SYNTHETASE"/>
    <property type="match status" value="1"/>
</dbReference>
<dbReference type="Pfam" id="PF00152">
    <property type="entry name" value="tRNA-synt_2"/>
    <property type="match status" value="1"/>
</dbReference>
<dbReference type="Pfam" id="PF01336">
    <property type="entry name" value="tRNA_anti-codon"/>
    <property type="match status" value="1"/>
</dbReference>
<dbReference type="PRINTS" id="PR01042">
    <property type="entry name" value="TRNASYNTHASP"/>
</dbReference>
<dbReference type="SUPFAM" id="SSF55681">
    <property type="entry name" value="Class II aaRS and biotin synthetases"/>
    <property type="match status" value="1"/>
</dbReference>
<dbReference type="SUPFAM" id="SSF50249">
    <property type="entry name" value="Nucleic acid-binding proteins"/>
    <property type="match status" value="1"/>
</dbReference>
<dbReference type="PROSITE" id="PS50862">
    <property type="entry name" value="AA_TRNA_LIGASE_II"/>
    <property type="match status" value="1"/>
</dbReference>
<accession>Q8K9I7</accession>
<protein>
    <recommendedName>
        <fullName evidence="1">Asparagine--tRNA ligase</fullName>
        <ecNumber evidence="1">6.1.1.22</ecNumber>
    </recommendedName>
    <alternativeName>
        <fullName evidence="1">Asparaginyl-tRNA synthetase</fullName>
        <shortName evidence="1">AsnRS</shortName>
    </alternativeName>
</protein>
<evidence type="ECO:0000255" key="1">
    <source>
        <dbReference type="HAMAP-Rule" id="MF_00534"/>
    </source>
</evidence>
<proteinExistence type="inferred from homology"/>
<sequence length="466" mass="53868">MSRISISEIYKDDIIVNTPITIFGWVRSRRSSKSGFSFITVYDGSCLNSVQVVADKTLSNYYKDILHLTIGCSVTITGILILSIGDKQKYEIKATKFQVLGWIKNPDTYPISAKKHSLEYLREVAHLRSRTNLIGVIVRIRHHIFQSLHKFLNKQGYYWIPTPIITGLNTEGTGEMFRVSTMDMRNIPKKINGSVDFKKDFFGKESFLTVSGQLNLEAYACSLSKVYTFGPTFRAENSNTSRHLAEFWMLEIESSFCNLDEILIFSEDMLKYICKSLLKYCINDIKFLKNYIDNDIINRLKKFLSVNFIRINYKDAIDILLNSKKKFDNVVSFGVDLNAEHERFLVEKHFKAPVVIINYPKELKAFYMRLNDDKKTVAAMDLLVPGIGELIGGSQREERISVLDLRLSELGLRKEDYWWYRDLRRYGTVHHSGFGMGFERLISYITGISNIRDIIPFPRTVKNADF</sequence>
<reference key="1">
    <citation type="journal article" date="2002" name="Science">
        <title>50 million years of genomic stasis in endosymbiotic bacteria.</title>
        <authorList>
            <person name="Tamas I."/>
            <person name="Klasson L."/>
            <person name="Canbaeck B."/>
            <person name="Naeslund A.K."/>
            <person name="Eriksson A.-S."/>
            <person name="Wernegreen J.J."/>
            <person name="Sandstroem J.P."/>
            <person name="Moran N.A."/>
            <person name="Andersson S.G.E."/>
        </authorList>
    </citation>
    <scope>NUCLEOTIDE SEQUENCE [LARGE SCALE GENOMIC DNA]</scope>
    <source>
        <strain>Sg</strain>
    </source>
</reference>
<gene>
    <name evidence="1" type="primary">asnS</name>
    <name type="ordered locus">BUsg_348</name>
</gene>
<organism>
    <name type="scientific">Buchnera aphidicola subsp. Schizaphis graminum (strain Sg)</name>
    <dbReference type="NCBI Taxonomy" id="198804"/>
    <lineage>
        <taxon>Bacteria</taxon>
        <taxon>Pseudomonadati</taxon>
        <taxon>Pseudomonadota</taxon>
        <taxon>Gammaproteobacteria</taxon>
        <taxon>Enterobacterales</taxon>
        <taxon>Erwiniaceae</taxon>
        <taxon>Buchnera</taxon>
    </lineage>
</organism>
<feature type="chain" id="PRO_0000176398" description="Asparagine--tRNA ligase">
    <location>
        <begin position="1"/>
        <end position="466"/>
    </location>
</feature>
<keyword id="KW-0030">Aminoacyl-tRNA synthetase</keyword>
<keyword id="KW-0067">ATP-binding</keyword>
<keyword id="KW-0963">Cytoplasm</keyword>
<keyword id="KW-0436">Ligase</keyword>
<keyword id="KW-0547">Nucleotide-binding</keyword>
<keyword id="KW-0648">Protein biosynthesis</keyword>
<name>SYN_BUCAP</name>
<comment type="catalytic activity">
    <reaction evidence="1">
        <text>tRNA(Asn) + L-asparagine + ATP = L-asparaginyl-tRNA(Asn) + AMP + diphosphate + H(+)</text>
        <dbReference type="Rhea" id="RHEA:11180"/>
        <dbReference type="Rhea" id="RHEA-COMP:9659"/>
        <dbReference type="Rhea" id="RHEA-COMP:9674"/>
        <dbReference type="ChEBI" id="CHEBI:15378"/>
        <dbReference type="ChEBI" id="CHEBI:30616"/>
        <dbReference type="ChEBI" id="CHEBI:33019"/>
        <dbReference type="ChEBI" id="CHEBI:58048"/>
        <dbReference type="ChEBI" id="CHEBI:78442"/>
        <dbReference type="ChEBI" id="CHEBI:78515"/>
        <dbReference type="ChEBI" id="CHEBI:456215"/>
        <dbReference type="EC" id="6.1.1.22"/>
    </reaction>
</comment>
<comment type="subunit">
    <text evidence="1">Homodimer.</text>
</comment>
<comment type="subcellular location">
    <subcellularLocation>
        <location evidence="1">Cytoplasm</location>
    </subcellularLocation>
</comment>
<comment type="similarity">
    <text evidence="1">Belongs to the class-II aminoacyl-tRNA synthetase family.</text>
</comment>